<accession>Q2GK21</accession>
<organism>
    <name type="scientific">Anaplasma phagocytophilum (strain HZ)</name>
    <dbReference type="NCBI Taxonomy" id="212042"/>
    <lineage>
        <taxon>Bacteria</taxon>
        <taxon>Pseudomonadati</taxon>
        <taxon>Pseudomonadota</taxon>
        <taxon>Alphaproteobacteria</taxon>
        <taxon>Rickettsiales</taxon>
        <taxon>Anaplasmataceae</taxon>
        <taxon>Anaplasma</taxon>
        <taxon>phagocytophilum group</taxon>
    </lineage>
</organism>
<comment type="similarity">
    <text evidence="1">Belongs to the bacterial ribosomal protein bL27 family.</text>
</comment>
<keyword id="KW-0687">Ribonucleoprotein</keyword>
<keyword id="KW-0689">Ribosomal protein</keyword>
<protein>
    <recommendedName>
        <fullName evidence="1">Large ribosomal subunit protein bL27</fullName>
    </recommendedName>
    <alternativeName>
        <fullName evidence="3">50S ribosomal protein L27</fullName>
    </alternativeName>
</protein>
<proteinExistence type="inferred from homology"/>
<gene>
    <name evidence="1" type="primary">rpmA</name>
    <name type="ordered locus">APH_0698</name>
</gene>
<sequence length="91" mass="9784">MATKKSGGSSCNGRDSRGRRLGVKKFGSELVIPGNIIIRQRGTKYHPGKNVGIGRDHTIFSKIAGVVSFRRKAEGRVFVDVLPESVSASLS</sequence>
<name>RL27_ANAPZ</name>
<feature type="chain" id="PRO_1000017405" description="Large ribosomal subunit protein bL27">
    <location>
        <begin position="1"/>
        <end position="91"/>
    </location>
</feature>
<feature type="region of interest" description="Disordered" evidence="2">
    <location>
        <begin position="1"/>
        <end position="20"/>
    </location>
</feature>
<feature type="compositionally biased region" description="Polar residues" evidence="2">
    <location>
        <begin position="1"/>
        <end position="13"/>
    </location>
</feature>
<reference key="1">
    <citation type="journal article" date="2006" name="PLoS Genet.">
        <title>Comparative genomics of emerging human ehrlichiosis agents.</title>
        <authorList>
            <person name="Dunning Hotopp J.C."/>
            <person name="Lin M."/>
            <person name="Madupu R."/>
            <person name="Crabtree J."/>
            <person name="Angiuoli S.V."/>
            <person name="Eisen J.A."/>
            <person name="Seshadri R."/>
            <person name="Ren Q."/>
            <person name="Wu M."/>
            <person name="Utterback T.R."/>
            <person name="Smith S."/>
            <person name="Lewis M."/>
            <person name="Khouri H."/>
            <person name="Zhang C."/>
            <person name="Niu H."/>
            <person name="Lin Q."/>
            <person name="Ohashi N."/>
            <person name="Zhi N."/>
            <person name="Nelson W.C."/>
            <person name="Brinkac L.M."/>
            <person name="Dodson R.J."/>
            <person name="Rosovitz M.J."/>
            <person name="Sundaram J.P."/>
            <person name="Daugherty S.C."/>
            <person name="Davidsen T."/>
            <person name="Durkin A.S."/>
            <person name="Gwinn M.L."/>
            <person name="Haft D.H."/>
            <person name="Selengut J.D."/>
            <person name="Sullivan S.A."/>
            <person name="Zafar N."/>
            <person name="Zhou L."/>
            <person name="Benahmed F."/>
            <person name="Forberger H."/>
            <person name="Halpin R."/>
            <person name="Mulligan S."/>
            <person name="Robinson J."/>
            <person name="White O."/>
            <person name="Rikihisa Y."/>
            <person name="Tettelin H."/>
        </authorList>
    </citation>
    <scope>NUCLEOTIDE SEQUENCE [LARGE SCALE GENOMIC DNA]</scope>
    <source>
        <strain>HZ</strain>
    </source>
</reference>
<dbReference type="EMBL" id="CP000235">
    <property type="protein sequence ID" value="ABD43609.1"/>
    <property type="molecule type" value="Genomic_DNA"/>
</dbReference>
<dbReference type="RefSeq" id="WP_011450801.1">
    <property type="nucleotide sequence ID" value="NC_007797.1"/>
</dbReference>
<dbReference type="SMR" id="Q2GK21"/>
<dbReference type="STRING" id="212042.APH_0698"/>
<dbReference type="PaxDb" id="212042-APH_0698"/>
<dbReference type="EnsemblBacteria" id="ABD43609">
    <property type="protein sequence ID" value="ABD43609"/>
    <property type="gene ID" value="APH_0698"/>
</dbReference>
<dbReference type="GeneID" id="92748239"/>
<dbReference type="KEGG" id="aph:APH_0698"/>
<dbReference type="eggNOG" id="COG0211">
    <property type="taxonomic scope" value="Bacteria"/>
</dbReference>
<dbReference type="HOGENOM" id="CLU_095424_4_1_5"/>
<dbReference type="Proteomes" id="UP000001943">
    <property type="component" value="Chromosome"/>
</dbReference>
<dbReference type="GO" id="GO:0022625">
    <property type="term" value="C:cytosolic large ribosomal subunit"/>
    <property type="evidence" value="ECO:0007669"/>
    <property type="project" value="TreeGrafter"/>
</dbReference>
<dbReference type="GO" id="GO:0003735">
    <property type="term" value="F:structural constituent of ribosome"/>
    <property type="evidence" value="ECO:0007669"/>
    <property type="project" value="InterPro"/>
</dbReference>
<dbReference type="GO" id="GO:0006412">
    <property type="term" value="P:translation"/>
    <property type="evidence" value="ECO:0007669"/>
    <property type="project" value="UniProtKB-UniRule"/>
</dbReference>
<dbReference type="FunFam" id="2.40.50.100:FF:000020">
    <property type="entry name" value="50S ribosomal protein L27"/>
    <property type="match status" value="1"/>
</dbReference>
<dbReference type="Gene3D" id="2.40.50.100">
    <property type="match status" value="1"/>
</dbReference>
<dbReference type="HAMAP" id="MF_00539">
    <property type="entry name" value="Ribosomal_bL27"/>
    <property type="match status" value="1"/>
</dbReference>
<dbReference type="InterPro" id="IPR001684">
    <property type="entry name" value="Ribosomal_bL27"/>
</dbReference>
<dbReference type="InterPro" id="IPR018261">
    <property type="entry name" value="Ribosomal_bL27_CS"/>
</dbReference>
<dbReference type="NCBIfam" id="TIGR00062">
    <property type="entry name" value="L27"/>
    <property type="match status" value="1"/>
</dbReference>
<dbReference type="PANTHER" id="PTHR15893:SF0">
    <property type="entry name" value="LARGE RIBOSOMAL SUBUNIT PROTEIN BL27M"/>
    <property type="match status" value="1"/>
</dbReference>
<dbReference type="PANTHER" id="PTHR15893">
    <property type="entry name" value="RIBOSOMAL PROTEIN L27"/>
    <property type="match status" value="1"/>
</dbReference>
<dbReference type="Pfam" id="PF01016">
    <property type="entry name" value="Ribosomal_L27"/>
    <property type="match status" value="1"/>
</dbReference>
<dbReference type="PRINTS" id="PR00063">
    <property type="entry name" value="RIBOSOMALL27"/>
</dbReference>
<dbReference type="SUPFAM" id="SSF110324">
    <property type="entry name" value="Ribosomal L27 protein-like"/>
    <property type="match status" value="1"/>
</dbReference>
<dbReference type="PROSITE" id="PS00831">
    <property type="entry name" value="RIBOSOMAL_L27"/>
    <property type="match status" value="1"/>
</dbReference>
<evidence type="ECO:0000255" key="1">
    <source>
        <dbReference type="HAMAP-Rule" id="MF_00539"/>
    </source>
</evidence>
<evidence type="ECO:0000256" key="2">
    <source>
        <dbReference type="SAM" id="MobiDB-lite"/>
    </source>
</evidence>
<evidence type="ECO:0000305" key="3"/>